<proteinExistence type="inferred from homology"/>
<comment type="function">
    <text evidence="1">Nucleoside triphosphate pyrophosphatase. May have a dual role in cell division arrest and in preventing the incorporation of modified nucleotides into cellular nucleic acids.</text>
</comment>
<comment type="catalytic activity">
    <reaction evidence="1">
        <text>a ribonucleoside 5'-triphosphate + H2O = a ribonucleoside 5'-phosphate + diphosphate + H(+)</text>
        <dbReference type="Rhea" id="RHEA:23996"/>
        <dbReference type="ChEBI" id="CHEBI:15377"/>
        <dbReference type="ChEBI" id="CHEBI:15378"/>
        <dbReference type="ChEBI" id="CHEBI:33019"/>
        <dbReference type="ChEBI" id="CHEBI:58043"/>
        <dbReference type="ChEBI" id="CHEBI:61557"/>
        <dbReference type="EC" id="3.6.1.9"/>
    </reaction>
</comment>
<comment type="catalytic activity">
    <reaction evidence="1">
        <text>a 2'-deoxyribonucleoside 5'-triphosphate + H2O = a 2'-deoxyribonucleoside 5'-phosphate + diphosphate + H(+)</text>
        <dbReference type="Rhea" id="RHEA:44644"/>
        <dbReference type="ChEBI" id="CHEBI:15377"/>
        <dbReference type="ChEBI" id="CHEBI:15378"/>
        <dbReference type="ChEBI" id="CHEBI:33019"/>
        <dbReference type="ChEBI" id="CHEBI:61560"/>
        <dbReference type="ChEBI" id="CHEBI:65317"/>
        <dbReference type="EC" id="3.6.1.9"/>
    </reaction>
</comment>
<comment type="cofactor">
    <cofactor evidence="1">
        <name>a divalent metal cation</name>
        <dbReference type="ChEBI" id="CHEBI:60240"/>
    </cofactor>
</comment>
<comment type="subcellular location">
    <subcellularLocation>
        <location evidence="1">Cytoplasm</location>
    </subcellularLocation>
</comment>
<comment type="similarity">
    <text evidence="1">Belongs to the Maf family.</text>
</comment>
<keyword id="KW-0963">Cytoplasm</keyword>
<keyword id="KW-0378">Hydrolase</keyword>
<keyword id="KW-0546">Nucleotide metabolism</keyword>
<dbReference type="EC" id="3.6.1.9" evidence="1"/>
<dbReference type="EMBL" id="AP007255">
    <property type="protein sequence ID" value="BAE53352.1"/>
    <property type="molecule type" value="Genomic_DNA"/>
</dbReference>
<dbReference type="SMR" id="Q2VYH3"/>
<dbReference type="STRING" id="342108.amb4548"/>
<dbReference type="KEGG" id="mag:amb4548"/>
<dbReference type="HOGENOM" id="CLU_040416_1_1_5"/>
<dbReference type="OrthoDB" id="9813962at2"/>
<dbReference type="Proteomes" id="UP000007058">
    <property type="component" value="Chromosome"/>
</dbReference>
<dbReference type="GO" id="GO:0005737">
    <property type="term" value="C:cytoplasm"/>
    <property type="evidence" value="ECO:0007669"/>
    <property type="project" value="UniProtKB-SubCell"/>
</dbReference>
<dbReference type="GO" id="GO:0047429">
    <property type="term" value="F:nucleoside triphosphate diphosphatase activity"/>
    <property type="evidence" value="ECO:0007669"/>
    <property type="project" value="UniProtKB-EC"/>
</dbReference>
<dbReference type="GO" id="GO:0009117">
    <property type="term" value="P:nucleotide metabolic process"/>
    <property type="evidence" value="ECO:0007669"/>
    <property type="project" value="UniProtKB-KW"/>
</dbReference>
<dbReference type="CDD" id="cd00555">
    <property type="entry name" value="Maf"/>
    <property type="match status" value="1"/>
</dbReference>
<dbReference type="Gene3D" id="3.90.950.10">
    <property type="match status" value="1"/>
</dbReference>
<dbReference type="HAMAP" id="MF_00528">
    <property type="entry name" value="Maf"/>
    <property type="match status" value="1"/>
</dbReference>
<dbReference type="InterPro" id="IPR029001">
    <property type="entry name" value="ITPase-like_fam"/>
</dbReference>
<dbReference type="InterPro" id="IPR003697">
    <property type="entry name" value="Maf-like"/>
</dbReference>
<dbReference type="PANTHER" id="PTHR43213">
    <property type="entry name" value="BIFUNCTIONAL DTTP/UTP PYROPHOSPHATASE/METHYLTRANSFERASE PROTEIN-RELATED"/>
    <property type="match status" value="1"/>
</dbReference>
<dbReference type="PANTHER" id="PTHR43213:SF5">
    <property type="entry name" value="BIFUNCTIONAL DTTP_UTP PYROPHOSPHATASE_METHYLTRANSFERASE PROTEIN-RELATED"/>
    <property type="match status" value="1"/>
</dbReference>
<dbReference type="Pfam" id="PF02545">
    <property type="entry name" value="Maf"/>
    <property type="match status" value="1"/>
</dbReference>
<dbReference type="PIRSF" id="PIRSF006305">
    <property type="entry name" value="Maf"/>
    <property type="match status" value="1"/>
</dbReference>
<dbReference type="SUPFAM" id="SSF52972">
    <property type="entry name" value="ITPase-like"/>
    <property type="match status" value="1"/>
</dbReference>
<accession>Q2VYH3</accession>
<reference key="1">
    <citation type="journal article" date="2005" name="DNA Res.">
        <title>Complete genome sequence of the facultative anaerobic magnetotactic bacterium Magnetospirillum sp. strain AMB-1.</title>
        <authorList>
            <person name="Matsunaga T."/>
            <person name="Okamura Y."/>
            <person name="Fukuda Y."/>
            <person name="Wahyudi A.T."/>
            <person name="Murase Y."/>
            <person name="Takeyama H."/>
        </authorList>
    </citation>
    <scope>NUCLEOTIDE SEQUENCE [LARGE SCALE GENOMIC DNA]</scope>
    <source>
        <strain>ATCC 700264 / AMB-1</strain>
    </source>
</reference>
<protein>
    <recommendedName>
        <fullName evidence="1">Nucleoside triphosphate pyrophosphatase</fullName>
        <ecNumber evidence="1">3.6.1.9</ecNumber>
    </recommendedName>
    <alternativeName>
        <fullName evidence="1">Nucleotide pyrophosphatase</fullName>
        <shortName evidence="1">Nucleotide PPase</shortName>
    </alternativeName>
</protein>
<name>NTPP_PARM1</name>
<feature type="chain" id="PRO_0000267334" description="Nucleoside triphosphate pyrophosphatase">
    <location>
        <begin position="1"/>
        <end position="194"/>
    </location>
</feature>
<feature type="active site" description="Proton acceptor" evidence="1">
    <location>
        <position position="71"/>
    </location>
</feature>
<evidence type="ECO:0000255" key="1">
    <source>
        <dbReference type="HAMAP-Rule" id="MF_00528"/>
    </source>
</evidence>
<gene>
    <name type="ordered locus">amb4548</name>
</gene>
<sequence length="194" mass="21139">MLASGSTARARMLEQAGIAFTVDVAAVDEEAVKHSMAAETRNPARVAEILAELKAVRVSARHPGALVIGADQMLDCDNVWFDKPADRQGARAQLLALRHKTHRLTSAVVAVRDGRRVWHHTEAAKLTMRNFSENFLDGYLDQAGEAVQTSVGAYQLEGLGSQLFLSVEGDFFTILGLPLLALMDFLRENGELVP</sequence>
<organism>
    <name type="scientific">Paramagnetospirillum magneticum (strain ATCC 700264 / AMB-1)</name>
    <name type="common">Magnetospirillum magneticum</name>
    <dbReference type="NCBI Taxonomy" id="342108"/>
    <lineage>
        <taxon>Bacteria</taxon>
        <taxon>Pseudomonadati</taxon>
        <taxon>Pseudomonadota</taxon>
        <taxon>Alphaproteobacteria</taxon>
        <taxon>Rhodospirillales</taxon>
        <taxon>Magnetospirillaceae</taxon>
        <taxon>Paramagnetospirillum</taxon>
    </lineage>
</organism>